<keyword id="KW-0067">ATP-binding</keyword>
<keyword id="KW-0227">DNA damage</keyword>
<keyword id="KW-0234">DNA repair</keyword>
<keyword id="KW-0238">DNA-binding</keyword>
<keyword id="KW-0269">Exonuclease</keyword>
<keyword id="KW-0347">Helicase</keyword>
<keyword id="KW-0378">Hydrolase</keyword>
<keyword id="KW-0413">Isomerase</keyword>
<keyword id="KW-0460">Magnesium</keyword>
<keyword id="KW-0479">Metal-binding</keyword>
<keyword id="KW-0540">Nuclease</keyword>
<keyword id="KW-0547">Nucleotide-binding</keyword>
<keyword id="KW-1185">Reference proteome</keyword>
<protein>
    <recommendedName>
        <fullName evidence="2">RecBCD enzyme subunit RecB</fullName>
        <ecNumber evidence="2">3.1.11.5</ecNumber>
        <ecNumber evidence="2">5.6.2.4</ecNumber>
    </recommendedName>
    <alternativeName>
        <fullName evidence="2">DNA 3'-5' helicase subunit RecB</fullName>
    </alternativeName>
    <alternativeName>
        <fullName evidence="2">Exonuclease V subunit RecB</fullName>
        <shortName evidence="2">ExoV subunit RecB</shortName>
    </alternativeName>
    <alternativeName>
        <fullName evidence="2">Helicase/nuclease RecBCD subunit RecB</fullName>
    </alternativeName>
</protein>
<name>RECB_BORBU</name>
<sequence length="1169" mass="137829">MNKILEKIQNNTTILIEASAGTGKTHILENVVINLIKTKLYSINEILVLTFTKKATEEMHTRILKVIENAYSNSKTNEILKEAYEQSKKLFISTINKFALHALNNFQIETENYSKYKPKEKFSKEIDEIVYDFLRKSDSLIQALDIKDYELKVFKSDAKKTEEIVLKIKKAYERDTTQELGDWLKTQTAFENILLKKEELIKDYNKIIEDLDKMTKDEILSFYNKHIQTGKLEIEYSKENDIFKIAETLLKNKFFSTLIEKETKKNSKLSPKELKIKNDLICLGINIKHEKYKSEDNRNKNRNNLKQYVILKVEYKILKYIEKELKKTIKSTNTIDQNYIISNLKNYLKSEDKKLLNAIKNRYKIILIDEAQDLSLIQIEIFKILKTAGIKLIFIADPKQIIYSFRKADISFYNKEIKNKINTDARIVLKINHRSSKKLIGPLNKIFNNIYNNAIADEIEKIDFTNSLPNQKNDNNKIVINGQEIEGINIITTNTESEEDIYQKTALTIKYLLAYGKIAENNKIRNIKMQDIKVLCRGKNEINLIDKALKKEQIQTNKTQEKFLKTKEFSEIFYIIKCLDRKQSFKTLNYILSSKILNVPWNLQRILIKQDKICLIEEFIENIIVLLEKNEITLINAINKITFEKNLWIKIANITKDQKIIEWAKNKINYKGLLIKEGKLENLKTYETTLEIISKIYHKEQNIQSLISTLESLIINEEPEEIEEKINNINNDNESIELMTIHKSKGLGMNIVFLLNTTPIENSNFFSKKNQFYKFYQDGKIEYDFFKLEENKKYARLKILSEEKNIFYVGATRAKFALFIIKINSITSKLLEIAKIFTIDDIKHDFNIHEFIGQKRFNKKKYNTNVNTKLIPPKPIIKNMFKKEYTSSFSSLTAQAHHKEFYENYDFKNINYEKETELDYEPGLEETLPKGKDIGNILHAAMEEIIFSTAKDTFDNFKKNNIEIIEKQIQKINSNLNTIEIQNSLAKMIYNILTYNIRAINTRLCDIEELQKEMEFLIKINPEFQKQKYLFDKHFEDLHIKLSDGYLKGIVDLIFKANNKIYILDYKTNYLGKNKEDYNITNLENTIKKEYYDLQYKIYALGIKKILFKNKKEYNQKFGGIIYLFTRAFEDNIECLKSKFENGIYFNLPKFNDVDLDKIILELGIKRHL</sequence>
<reference key="1">
    <citation type="journal article" date="1997" name="Nature">
        <title>Genomic sequence of a Lyme disease spirochaete, Borrelia burgdorferi.</title>
        <authorList>
            <person name="Fraser C.M."/>
            <person name="Casjens S."/>
            <person name="Huang W.M."/>
            <person name="Sutton G.G."/>
            <person name="Clayton R.A."/>
            <person name="Lathigra R."/>
            <person name="White O."/>
            <person name="Ketchum K.A."/>
            <person name="Dodson R.J."/>
            <person name="Hickey E.K."/>
            <person name="Gwinn M.L."/>
            <person name="Dougherty B.A."/>
            <person name="Tomb J.-F."/>
            <person name="Fleischmann R.D."/>
            <person name="Richardson D.L."/>
            <person name="Peterson J.D."/>
            <person name="Kerlavage A.R."/>
            <person name="Quackenbush J."/>
            <person name="Salzberg S.L."/>
            <person name="Hanson M."/>
            <person name="van Vugt R."/>
            <person name="Palmer N."/>
            <person name="Adams M.D."/>
            <person name="Gocayne J.D."/>
            <person name="Weidman J.F."/>
            <person name="Utterback T.R."/>
            <person name="Watthey L."/>
            <person name="McDonald L.A."/>
            <person name="Artiach P."/>
            <person name="Bowman C."/>
            <person name="Garland S.A."/>
            <person name="Fujii C."/>
            <person name="Cotton M.D."/>
            <person name="Horst K."/>
            <person name="Roberts K.M."/>
            <person name="Hatch B."/>
            <person name="Smith H.O."/>
            <person name="Venter J.C."/>
        </authorList>
    </citation>
    <scope>NUCLEOTIDE SEQUENCE [LARGE SCALE GENOMIC DNA]</scope>
    <source>
        <strain>ATCC 35210 / DSM 4680 / CIP 102532 / B31</strain>
    </source>
</reference>
<comment type="function">
    <text evidence="2">A helicase/nuclease that prepares dsDNA breaks (DSB) for recombinational DNA repair. Binds to DSBs and unwinds DNA via a highly rapid and processive ATP-dependent bidirectional helicase activity. Unwinds dsDNA until it encounters a Chi (crossover hotspot instigator) sequence from the 3' direction. Cuts ssDNA a few nucleotides 3' to the Chi site. The properties and activities of the enzyme are changed at Chi. The Chi-altered holoenzyme produces a long 3'-ssDNA overhang and facilitates RecA-binding to the ssDNA for homologous DNA recombination and repair. Holoenzyme degrades any linearized DNA that is unable to undergo homologous recombination. In the holoenzyme this subunit contributes ATPase, 3'-5' helicase, exonuclease activity and loads RecA onto ssDNA.</text>
</comment>
<comment type="catalytic activity">
    <reaction evidence="2">
        <text>Exonucleolytic cleavage (in the presence of ATP) in either 5'- to 3'- or 3'- to 5'-direction to yield 5'-phosphooligonucleotides.</text>
        <dbReference type="EC" id="3.1.11.5"/>
    </reaction>
</comment>
<comment type="catalytic activity">
    <reaction evidence="2">
        <text>Couples ATP hydrolysis with the unwinding of duplex DNA by translocating in the 3'-5' direction.</text>
        <dbReference type="EC" id="5.6.2.4"/>
    </reaction>
</comment>
<comment type="catalytic activity">
    <reaction evidence="2">
        <text>ATP + H2O = ADP + phosphate + H(+)</text>
        <dbReference type="Rhea" id="RHEA:13065"/>
        <dbReference type="ChEBI" id="CHEBI:15377"/>
        <dbReference type="ChEBI" id="CHEBI:15378"/>
        <dbReference type="ChEBI" id="CHEBI:30616"/>
        <dbReference type="ChEBI" id="CHEBI:43474"/>
        <dbReference type="ChEBI" id="CHEBI:456216"/>
        <dbReference type="EC" id="5.6.2.4"/>
    </reaction>
</comment>
<comment type="cofactor">
    <cofactor evidence="2">
        <name>Mg(2+)</name>
        <dbReference type="ChEBI" id="CHEBI:18420"/>
    </cofactor>
    <text evidence="2">Binds 1 Mg(2+) ion per subunit.</text>
</comment>
<comment type="subunit">
    <text evidence="2">Heterotrimer of RecB, RecC and RecD. All subunits contribute to DNA-binding. Interacts with RecA.</text>
</comment>
<comment type="domain">
    <text evidence="2">The N-terminal DNA-binding domain is a ssDNA-dependent ATPase and has ATP-dependent 3'-5' helicase function. This domain interacts with RecC.</text>
</comment>
<comment type="domain">
    <text evidence="2">The C-terminal domain has nuclease activity and interacts with RecD. It interacts with RecA, facilitating its loading onto ssDNA.</text>
</comment>
<comment type="miscellaneous">
    <text evidence="2">In the RecBCD complex, RecB has a slow 3'-5' helicase, an exonuclease activity and loads RecA onto ssDNA, RecD has a fast 5'-3' helicase activity, while RecC stimulates the ATPase and processivity of the RecB helicase and contributes to recognition of the Chi site.</text>
</comment>
<comment type="similarity">
    <text evidence="2">Belongs to the helicase family. UvrD subfamily.</text>
</comment>
<evidence type="ECO:0000250" key="1">
    <source>
        <dbReference type="UniProtKB" id="P08394"/>
    </source>
</evidence>
<evidence type="ECO:0000255" key="2">
    <source>
        <dbReference type="HAMAP-Rule" id="MF_01485"/>
    </source>
</evidence>
<organism>
    <name type="scientific">Borreliella burgdorferi (strain ATCC 35210 / DSM 4680 / CIP 102532 / B31)</name>
    <name type="common">Borrelia burgdorferi</name>
    <dbReference type="NCBI Taxonomy" id="224326"/>
    <lineage>
        <taxon>Bacteria</taxon>
        <taxon>Pseudomonadati</taxon>
        <taxon>Spirochaetota</taxon>
        <taxon>Spirochaetia</taxon>
        <taxon>Spirochaetales</taxon>
        <taxon>Borreliaceae</taxon>
        <taxon>Borreliella</taxon>
    </lineage>
</organism>
<feature type="chain" id="PRO_0000102039" description="RecBCD enzyme subunit RecB">
    <location>
        <begin position="1"/>
        <end position="1169"/>
    </location>
</feature>
<feature type="domain" description="UvrD-like helicase ATP-binding" evidence="2">
    <location>
        <begin position="1"/>
        <end position="436"/>
    </location>
</feature>
<feature type="domain" description="UvrD-like helicase C-terminal" evidence="2">
    <location>
        <begin position="459"/>
        <end position="746"/>
    </location>
</feature>
<feature type="region of interest" description="DNA-binding and helicase activity, interacts with RecC" evidence="2">
    <location>
        <begin position="1"/>
        <end position="839"/>
    </location>
</feature>
<feature type="region of interest" description="Nuclease activity, interacts with RecD and RecA" evidence="2">
    <location>
        <begin position="883"/>
        <end position="1169"/>
    </location>
</feature>
<feature type="active site" description="For nuclease activity" evidence="1 2">
    <location>
        <position position="1065"/>
    </location>
</feature>
<feature type="binding site" evidence="2">
    <location>
        <begin position="18"/>
        <end position="25"/>
    </location>
    <ligand>
        <name>ATP</name>
        <dbReference type="ChEBI" id="CHEBI:30616"/>
    </ligand>
</feature>
<feature type="binding site" evidence="2">
    <location>
        <position position="939"/>
    </location>
    <ligand>
        <name>Mg(2+)</name>
        <dbReference type="ChEBI" id="CHEBI:18420"/>
    </ligand>
</feature>
<feature type="binding site" evidence="2">
    <location>
        <position position="1052"/>
    </location>
    <ligand>
        <name>Mg(2+)</name>
        <dbReference type="ChEBI" id="CHEBI:18420"/>
    </ligand>
</feature>
<feature type="binding site" evidence="2">
    <location>
        <position position="1065"/>
    </location>
    <ligand>
        <name>Mg(2+)</name>
        <dbReference type="ChEBI" id="CHEBI:18420"/>
    </ligand>
</feature>
<proteinExistence type="inferred from homology"/>
<gene>
    <name evidence="2" type="primary">recB</name>
    <name type="ordered locus">BB_0633</name>
</gene>
<dbReference type="EC" id="3.1.11.5" evidence="2"/>
<dbReference type="EC" id="5.6.2.4" evidence="2"/>
<dbReference type="EMBL" id="AE000783">
    <property type="protein sequence ID" value="AAC66981.1"/>
    <property type="molecule type" value="Genomic_DNA"/>
</dbReference>
<dbReference type="PIR" id="H70178">
    <property type="entry name" value="H70178"/>
</dbReference>
<dbReference type="RefSeq" id="NP_212767.1">
    <property type="nucleotide sequence ID" value="NC_001318.1"/>
</dbReference>
<dbReference type="RefSeq" id="WP_010889786.1">
    <property type="nucleotide sequence ID" value="NC_001318.1"/>
</dbReference>
<dbReference type="SMR" id="O51578"/>
<dbReference type="STRING" id="224326.BB_0633"/>
<dbReference type="PaxDb" id="224326-BB_0633"/>
<dbReference type="EnsemblBacteria" id="AAC66981">
    <property type="protein sequence ID" value="AAC66981"/>
    <property type="gene ID" value="BB_0633"/>
</dbReference>
<dbReference type="KEGG" id="bbu:BB_0633"/>
<dbReference type="PATRIC" id="fig|224326.49.peg.1023"/>
<dbReference type="HOGENOM" id="CLU_008504_0_0_12"/>
<dbReference type="OrthoDB" id="9810135at2"/>
<dbReference type="Proteomes" id="UP000001807">
    <property type="component" value="Chromosome"/>
</dbReference>
<dbReference type="GO" id="GO:0005829">
    <property type="term" value="C:cytosol"/>
    <property type="evidence" value="ECO:0007669"/>
    <property type="project" value="TreeGrafter"/>
</dbReference>
<dbReference type="GO" id="GO:0009338">
    <property type="term" value="C:exodeoxyribonuclease V complex"/>
    <property type="evidence" value="ECO:0007669"/>
    <property type="project" value="TreeGrafter"/>
</dbReference>
<dbReference type="GO" id="GO:0043138">
    <property type="term" value="F:3'-5' DNA helicase activity"/>
    <property type="evidence" value="ECO:0007669"/>
    <property type="project" value="UniProtKB-UniRule"/>
</dbReference>
<dbReference type="GO" id="GO:0005524">
    <property type="term" value="F:ATP binding"/>
    <property type="evidence" value="ECO:0007669"/>
    <property type="project" value="UniProtKB-UniRule"/>
</dbReference>
<dbReference type="GO" id="GO:0016887">
    <property type="term" value="F:ATP hydrolysis activity"/>
    <property type="evidence" value="ECO:0007669"/>
    <property type="project" value="RHEA"/>
</dbReference>
<dbReference type="GO" id="GO:0003677">
    <property type="term" value="F:DNA binding"/>
    <property type="evidence" value="ECO:0007669"/>
    <property type="project" value="UniProtKB-UniRule"/>
</dbReference>
<dbReference type="GO" id="GO:0008854">
    <property type="term" value="F:exodeoxyribonuclease V activity"/>
    <property type="evidence" value="ECO:0007669"/>
    <property type="project" value="UniProtKB-EC"/>
</dbReference>
<dbReference type="GO" id="GO:0000287">
    <property type="term" value="F:magnesium ion binding"/>
    <property type="evidence" value="ECO:0007669"/>
    <property type="project" value="UniProtKB-UniRule"/>
</dbReference>
<dbReference type="GO" id="GO:0000724">
    <property type="term" value="P:double-strand break repair via homologous recombination"/>
    <property type="evidence" value="ECO:0007669"/>
    <property type="project" value="UniProtKB-UniRule"/>
</dbReference>
<dbReference type="CDD" id="cd22352">
    <property type="entry name" value="RecB_C-like"/>
    <property type="match status" value="1"/>
</dbReference>
<dbReference type="Gene3D" id="3.90.320.10">
    <property type="match status" value="1"/>
</dbReference>
<dbReference type="Gene3D" id="3.40.50.300">
    <property type="entry name" value="P-loop containing nucleotide triphosphate hydrolases"/>
    <property type="match status" value="3"/>
</dbReference>
<dbReference type="Gene3D" id="1.10.486.10">
    <property type="entry name" value="PCRA, domain 4"/>
    <property type="match status" value="1"/>
</dbReference>
<dbReference type="HAMAP" id="MF_01485">
    <property type="entry name" value="RecB"/>
    <property type="match status" value="1"/>
</dbReference>
<dbReference type="InterPro" id="IPR014017">
    <property type="entry name" value="DNA_helicase_UvrD-like_C"/>
</dbReference>
<dbReference type="InterPro" id="IPR000212">
    <property type="entry name" value="DNA_helicase_UvrD/REP"/>
</dbReference>
<dbReference type="InterPro" id="IPR027417">
    <property type="entry name" value="P-loop_NTPase"/>
</dbReference>
<dbReference type="InterPro" id="IPR011604">
    <property type="entry name" value="PDDEXK-like_dom_sf"/>
</dbReference>
<dbReference type="InterPro" id="IPR038726">
    <property type="entry name" value="PDDEXK_AddAB-type"/>
</dbReference>
<dbReference type="InterPro" id="IPR004586">
    <property type="entry name" value="RecB"/>
</dbReference>
<dbReference type="InterPro" id="IPR011335">
    <property type="entry name" value="Restrct_endonuc-II-like"/>
</dbReference>
<dbReference type="InterPro" id="IPR014016">
    <property type="entry name" value="UvrD-like_ATP-bd"/>
</dbReference>
<dbReference type="NCBIfam" id="TIGR00609">
    <property type="entry name" value="recB"/>
    <property type="match status" value="1"/>
</dbReference>
<dbReference type="PANTHER" id="PTHR11070:SF23">
    <property type="entry name" value="RECBCD ENZYME SUBUNIT RECB"/>
    <property type="match status" value="1"/>
</dbReference>
<dbReference type="PANTHER" id="PTHR11070">
    <property type="entry name" value="UVRD / RECB / PCRA DNA HELICASE FAMILY MEMBER"/>
    <property type="match status" value="1"/>
</dbReference>
<dbReference type="Pfam" id="PF13245">
    <property type="entry name" value="AAA_19"/>
    <property type="match status" value="1"/>
</dbReference>
<dbReference type="Pfam" id="PF12705">
    <property type="entry name" value="PDDEXK_1"/>
    <property type="match status" value="1"/>
</dbReference>
<dbReference type="Pfam" id="PF00580">
    <property type="entry name" value="UvrD-helicase"/>
    <property type="match status" value="1"/>
</dbReference>
<dbReference type="Pfam" id="PF13361">
    <property type="entry name" value="UvrD_C"/>
    <property type="match status" value="1"/>
</dbReference>
<dbReference type="SUPFAM" id="SSF52540">
    <property type="entry name" value="P-loop containing nucleoside triphosphate hydrolases"/>
    <property type="match status" value="1"/>
</dbReference>
<dbReference type="SUPFAM" id="SSF52980">
    <property type="entry name" value="Restriction endonuclease-like"/>
    <property type="match status" value="1"/>
</dbReference>
<dbReference type="PROSITE" id="PS51198">
    <property type="entry name" value="UVRD_HELICASE_ATP_BIND"/>
    <property type="match status" value="1"/>
</dbReference>
<dbReference type="PROSITE" id="PS51217">
    <property type="entry name" value="UVRD_HELICASE_CTER"/>
    <property type="match status" value="1"/>
</dbReference>
<accession>O51578</accession>